<feature type="chain" id="PRO_0000269674" description="Glutaredoxin-C13">
    <location>
        <begin position="1"/>
        <end position="109"/>
    </location>
</feature>
<feature type="domain" description="Glutaredoxin" evidence="2">
    <location>
        <begin position="2"/>
        <end position="108"/>
    </location>
</feature>
<feature type="short sequence motif" description="Responsive for interaction with TGA factors" evidence="1">
    <location>
        <begin position="106"/>
        <end position="109"/>
    </location>
</feature>
<feature type="disulfide bond" description="Redox-active" evidence="1">
    <location>
        <begin position="22"/>
        <end position="25"/>
    </location>
</feature>
<protein>
    <recommendedName>
        <fullName>Glutaredoxin-C13</fullName>
    </recommendedName>
</protein>
<proteinExistence type="inferred from homology"/>
<name>GRC13_ORYSJ</name>
<reference key="1">
    <citation type="journal article" date="2005" name="BMC Biol.">
        <title>The sequence of rice chromosomes 11 and 12, rich in disease resistance genes and recent gene duplications.</title>
        <authorList>
            <consortium name="The rice chromosomes 11 and 12 sequencing consortia"/>
        </authorList>
    </citation>
    <scope>NUCLEOTIDE SEQUENCE [LARGE SCALE GENOMIC DNA]</scope>
    <source>
        <strain>cv. Nipponbare</strain>
    </source>
</reference>
<reference key="2">
    <citation type="journal article" date="2005" name="Nature">
        <title>The map-based sequence of the rice genome.</title>
        <authorList>
            <consortium name="International rice genome sequencing project (IRGSP)"/>
        </authorList>
    </citation>
    <scope>NUCLEOTIDE SEQUENCE [LARGE SCALE GENOMIC DNA]</scope>
    <source>
        <strain>cv. Nipponbare</strain>
    </source>
</reference>
<reference key="3">
    <citation type="journal article" date="2008" name="Nucleic Acids Res.">
        <title>The rice annotation project database (RAP-DB): 2008 update.</title>
        <authorList>
            <consortium name="The rice annotation project (RAP)"/>
        </authorList>
    </citation>
    <scope>GENOME REANNOTATION</scope>
    <source>
        <strain>cv. Nipponbare</strain>
    </source>
</reference>
<reference key="4">
    <citation type="journal article" date="2013" name="Rice">
        <title>Improvement of the Oryza sativa Nipponbare reference genome using next generation sequence and optical map data.</title>
        <authorList>
            <person name="Kawahara Y."/>
            <person name="de la Bastide M."/>
            <person name="Hamilton J.P."/>
            <person name="Kanamori H."/>
            <person name="McCombie W.R."/>
            <person name="Ouyang S."/>
            <person name="Schwartz D.C."/>
            <person name="Tanaka T."/>
            <person name="Wu J."/>
            <person name="Zhou S."/>
            <person name="Childs K.L."/>
            <person name="Davidson R.M."/>
            <person name="Lin H."/>
            <person name="Quesada-Ocampo L."/>
            <person name="Vaillancourt B."/>
            <person name="Sakai H."/>
            <person name="Lee S.S."/>
            <person name="Kim J."/>
            <person name="Numa H."/>
            <person name="Itoh T."/>
            <person name="Buell C.R."/>
            <person name="Matsumoto T."/>
        </authorList>
    </citation>
    <scope>GENOME REANNOTATION</scope>
    <source>
        <strain>cv. Nipponbare</strain>
    </source>
</reference>
<reference key="5">
    <citation type="journal article" date="2006" name="J. Exp. Bot.">
        <title>Genome-wide analysis of plant glutaredoxin systems.</title>
        <authorList>
            <person name="Rouhier N."/>
            <person name="Couturier J."/>
            <person name="Jacquot J.-P."/>
        </authorList>
    </citation>
    <scope>GENE FAMILY</scope>
</reference>
<accession>Q0IRB0</accession>
<accession>C7J849</accession>
<accession>Q2R070</accession>
<organism>
    <name type="scientific">Oryza sativa subsp. japonica</name>
    <name type="common">Rice</name>
    <dbReference type="NCBI Taxonomy" id="39947"/>
    <lineage>
        <taxon>Eukaryota</taxon>
        <taxon>Viridiplantae</taxon>
        <taxon>Streptophyta</taxon>
        <taxon>Embryophyta</taxon>
        <taxon>Tracheophyta</taxon>
        <taxon>Spermatophyta</taxon>
        <taxon>Magnoliopsida</taxon>
        <taxon>Liliopsida</taxon>
        <taxon>Poales</taxon>
        <taxon>Poaceae</taxon>
        <taxon>BOP clade</taxon>
        <taxon>Oryzoideae</taxon>
        <taxon>Oryzeae</taxon>
        <taxon>Oryzinae</taxon>
        <taxon>Oryza</taxon>
        <taxon>Oryza sativa</taxon>
    </lineage>
</organism>
<evidence type="ECO:0000250" key="1"/>
<evidence type="ECO:0000255" key="2">
    <source>
        <dbReference type="PROSITE-ProRule" id="PRU00686"/>
    </source>
</evidence>
<evidence type="ECO:0000305" key="3"/>
<gene>
    <name type="primary">GRXC13</name>
    <name type="ordered locus">Os11g0656700</name>
    <name type="ordered locus">LOC_Os11g43580</name>
</gene>
<comment type="function">
    <text evidence="1">Has a glutathione-disulfide oxidoreductase activity in the presence of NADPH and glutathione reductase. Reduces low molecular weight disulfides and proteins (By similarity).</text>
</comment>
<comment type="subcellular location">
    <subcellularLocation>
        <location evidence="1">Cytoplasm</location>
    </subcellularLocation>
    <subcellularLocation>
        <location evidence="1">Nucleus</location>
    </subcellularLocation>
</comment>
<comment type="similarity">
    <text evidence="3">Belongs to the glutaredoxin family. CC-type subfamily.</text>
</comment>
<comment type="sequence caution" evidence="3">
    <conflict type="erroneous initiation">
        <sequence resource="EMBL-CDS" id="BAF28755"/>
    </conflict>
</comment>
<dbReference type="EMBL" id="DP000010">
    <property type="protein sequence ID" value="ABA95165.1"/>
    <property type="molecule type" value="Genomic_DNA"/>
</dbReference>
<dbReference type="EMBL" id="AP008217">
    <property type="protein sequence ID" value="BAF28755.1"/>
    <property type="status" value="ALT_INIT"/>
    <property type="molecule type" value="Genomic_DNA"/>
</dbReference>
<dbReference type="EMBL" id="AP008217">
    <property type="protein sequence ID" value="BAH95419.1"/>
    <property type="molecule type" value="Genomic_DNA"/>
</dbReference>
<dbReference type="EMBL" id="AP014967">
    <property type="protein sequence ID" value="BAT15109.1"/>
    <property type="molecule type" value="Genomic_DNA"/>
</dbReference>
<dbReference type="RefSeq" id="XP_015616366.1">
    <property type="nucleotide sequence ID" value="XM_015760880.1"/>
</dbReference>
<dbReference type="SMR" id="Q0IRB0"/>
<dbReference type="FunCoup" id="Q0IRB0">
    <property type="interactions" value="14"/>
</dbReference>
<dbReference type="STRING" id="39947.Q0IRB0"/>
<dbReference type="PaxDb" id="39947-Q0IRB0"/>
<dbReference type="EnsemblPlants" id="Os11t0656700-00">
    <property type="protein sequence ID" value="Os11t0656700-00"/>
    <property type="gene ID" value="Os11g0656700"/>
</dbReference>
<dbReference type="Gramene" id="Os11t0656700-00">
    <property type="protein sequence ID" value="Os11t0656700-00"/>
    <property type="gene ID" value="Os11g0656700"/>
</dbReference>
<dbReference type="KEGG" id="dosa:Os11g0656801"/>
<dbReference type="eggNOG" id="KOG1752">
    <property type="taxonomic scope" value="Eukaryota"/>
</dbReference>
<dbReference type="HOGENOM" id="CLU_026126_6_0_1"/>
<dbReference type="InParanoid" id="Q0IRB0"/>
<dbReference type="OMA" id="MCHAVTT"/>
<dbReference type="OrthoDB" id="418495at2759"/>
<dbReference type="Proteomes" id="UP000000763">
    <property type="component" value="Chromosome 11"/>
</dbReference>
<dbReference type="Proteomes" id="UP000059680">
    <property type="component" value="Chromosome 11"/>
</dbReference>
<dbReference type="GO" id="GO:0005737">
    <property type="term" value="C:cytoplasm"/>
    <property type="evidence" value="ECO:0007669"/>
    <property type="project" value="UniProtKB-SubCell"/>
</dbReference>
<dbReference type="GO" id="GO:0005634">
    <property type="term" value="C:nucleus"/>
    <property type="evidence" value="ECO:0007669"/>
    <property type="project" value="UniProtKB-SubCell"/>
</dbReference>
<dbReference type="CDD" id="cd03419">
    <property type="entry name" value="GRX_GRXh_1_2_like"/>
    <property type="match status" value="1"/>
</dbReference>
<dbReference type="Gene3D" id="3.40.30.10">
    <property type="entry name" value="Glutaredoxin"/>
    <property type="match status" value="1"/>
</dbReference>
<dbReference type="InterPro" id="IPR011905">
    <property type="entry name" value="GlrX-like_pln_2"/>
</dbReference>
<dbReference type="InterPro" id="IPR002109">
    <property type="entry name" value="Glutaredoxin"/>
</dbReference>
<dbReference type="InterPro" id="IPR014025">
    <property type="entry name" value="Glutaredoxin_subgr"/>
</dbReference>
<dbReference type="InterPro" id="IPR036249">
    <property type="entry name" value="Thioredoxin-like_sf"/>
</dbReference>
<dbReference type="NCBIfam" id="TIGR02189">
    <property type="entry name" value="GlrX-like_plant"/>
    <property type="match status" value="1"/>
</dbReference>
<dbReference type="PANTHER" id="PTHR10168">
    <property type="entry name" value="GLUTAREDOXIN"/>
    <property type="match status" value="1"/>
</dbReference>
<dbReference type="Pfam" id="PF00462">
    <property type="entry name" value="Glutaredoxin"/>
    <property type="match status" value="1"/>
</dbReference>
<dbReference type="PRINTS" id="PR00160">
    <property type="entry name" value="GLUTAREDOXIN"/>
</dbReference>
<dbReference type="SUPFAM" id="SSF52833">
    <property type="entry name" value="Thioredoxin-like"/>
    <property type="match status" value="1"/>
</dbReference>
<dbReference type="PROSITE" id="PS51354">
    <property type="entry name" value="GLUTAREDOXIN_2"/>
    <property type="match status" value="1"/>
</dbReference>
<keyword id="KW-0963">Cytoplasm</keyword>
<keyword id="KW-1015">Disulfide bond</keyword>
<keyword id="KW-0249">Electron transport</keyword>
<keyword id="KW-0539">Nucleus</keyword>
<keyword id="KW-0676">Redox-active center</keyword>
<keyword id="KW-1185">Reference proteome</keyword>
<keyword id="KW-0813">Transport</keyword>
<sequence length="109" mass="11417">MAEMVARLASERAVVVFTKSGCCMCTAVTTLLGELAVSAAVHELDREPLGKEMERELARRLYGSGGRGGPAVPAVFIGGSLVGSTSKVMAMHLKGELVPMLKNAGALWL</sequence>